<dbReference type="EC" id="3.5.2.6"/>
<dbReference type="EMBL" id="AF164577">
    <property type="protein sequence ID" value="AAD43815.1"/>
    <property type="molecule type" value="Genomic_DNA"/>
</dbReference>
<dbReference type="RefSeq" id="WP_063864619.1">
    <property type="nucleotide sequence ID" value="NG_050008.1"/>
</dbReference>
<dbReference type="SMR" id="Q9S424"/>
<dbReference type="CARD" id="ARO:3001072">
    <property type="molecule name" value="SHV-13"/>
    <property type="mechanism identifier" value="ARO:0001004"/>
    <property type="mechanism name" value="antibiotic inactivation"/>
</dbReference>
<dbReference type="KEGG" id="ag:AAD43815"/>
<dbReference type="GO" id="GO:0008800">
    <property type="term" value="F:beta-lactamase activity"/>
    <property type="evidence" value="ECO:0007669"/>
    <property type="project" value="UniProtKB-EC"/>
</dbReference>
<dbReference type="GO" id="GO:0030655">
    <property type="term" value="P:beta-lactam antibiotic catabolic process"/>
    <property type="evidence" value="ECO:0007669"/>
    <property type="project" value="InterPro"/>
</dbReference>
<dbReference type="GO" id="GO:0046677">
    <property type="term" value="P:response to antibiotic"/>
    <property type="evidence" value="ECO:0007669"/>
    <property type="project" value="UniProtKB-KW"/>
</dbReference>
<dbReference type="Gene3D" id="3.40.710.10">
    <property type="entry name" value="DD-peptidase/beta-lactamase superfamily"/>
    <property type="match status" value="1"/>
</dbReference>
<dbReference type="InterPro" id="IPR012338">
    <property type="entry name" value="Beta-lactam/transpept-like"/>
</dbReference>
<dbReference type="InterPro" id="IPR045155">
    <property type="entry name" value="Beta-lactam_cat"/>
</dbReference>
<dbReference type="InterPro" id="IPR000871">
    <property type="entry name" value="Beta-lactam_class-A"/>
</dbReference>
<dbReference type="InterPro" id="IPR023650">
    <property type="entry name" value="Beta-lactam_class-A_AS"/>
</dbReference>
<dbReference type="NCBIfam" id="NF033103">
    <property type="entry name" value="bla_class_A"/>
    <property type="match status" value="1"/>
</dbReference>
<dbReference type="NCBIfam" id="NF000285">
    <property type="entry name" value="SHV"/>
    <property type="match status" value="1"/>
</dbReference>
<dbReference type="NCBIfam" id="NF012143">
    <property type="entry name" value="SHV_LEN_OKP"/>
    <property type="match status" value="1"/>
</dbReference>
<dbReference type="PANTHER" id="PTHR35333">
    <property type="entry name" value="BETA-LACTAMASE"/>
    <property type="match status" value="1"/>
</dbReference>
<dbReference type="PANTHER" id="PTHR35333:SF3">
    <property type="entry name" value="BETA-LACTAMASE-TYPE TRANSPEPTIDASE FOLD CONTAINING PROTEIN"/>
    <property type="match status" value="1"/>
</dbReference>
<dbReference type="Pfam" id="PF13354">
    <property type="entry name" value="Beta-lactamase2"/>
    <property type="match status" value="1"/>
</dbReference>
<dbReference type="PRINTS" id="PR00118">
    <property type="entry name" value="BLACTAMASEA"/>
</dbReference>
<dbReference type="SUPFAM" id="SSF56601">
    <property type="entry name" value="beta-lactamase/transpeptidase-like"/>
    <property type="match status" value="1"/>
</dbReference>
<dbReference type="PROSITE" id="PS00146">
    <property type="entry name" value="BETA_LACTAMASE_A"/>
    <property type="match status" value="1"/>
</dbReference>
<feature type="signal peptide" evidence="2">
    <location>
        <begin position="1"/>
        <end position="21"/>
    </location>
</feature>
<feature type="chain" id="PRO_0000016987" description="Beta-lactamase SHV-13">
    <location>
        <begin position="22"/>
        <end position="286"/>
    </location>
</feature>
<feature type="active site" description="Acyl-ester intermediate" evidence="3">
    <location>
        <position position="66"/>
    </location>
</feature>
<feature type="active site" description="Proton acceptor" evidence="1">
    <location>
        <position position="164"/>
    </location>
</feature>
<feature type="binding site" evidence="1">
    <location>
        <begin position="230"/>
        <end position="232"/>
    </location>
    <ligand>
        <name>substrate</name>
    </ligand>
</feature>
<feature type="disulfide bond" evidence="1">
    <location>
        <begin position="73"/>
        <end position="119"/>
    </location>
</feature>
<geneLocation type="plasmid"/>
<keyword id="KW-0046">Antibiotic resistance</keyword>
<keyword id="KW-1015">Disulfide bond</keyword>
<keyword id="KW-0378">Hydrolase</keyword>
<keyword id="KW-0614">Plasmid</keyword>
<keyword id="KW-0732">Signal</keyword>
<organism>
    <name type="scientific">Klebsiella pneumoniae</name>
    <dbReference type="NCBI Taxonomy" id="573"/>
    <lineage>
        <taxon>Bacteria</taxon>
        <taxon>Pseudomonadati</taxon>
        <taxon>Pseudomonadota</taxon>
        <taxon>Gammaproteobacteria</taxon>
        <taxon>Enterobacterales</taxon>
        <taxon>Enterobacteriaceae</taxon>
        <taxon>Klebsiella/Raoultella group</taxon>
        <taxon>Klebsiella</taxon>
        <taxon>Klebsiella pneumoniae complex</taxon>
    </lineage>
</organism>
<accession>Q9S424</accession>
<reference key="1">
    <citation type="journal article" date="2000" name="Antimicrob. Agents Chemother.">
        <title>SHV-13, a novel extended-spectrum beta-lactamase, in Klebsiella pneumoniae isolates from patients in an intensive care unit in Amsterdam.</title>
        <authorList>
            <person name="Yuan M."/>
            <person name="Hall L.M.C."/>
            <person name="Savelkoul P.H.M."/>
            <person name="Vandenbroucke-Grauls C.M.J.E."/>
            <person name="Livermore D.M."/>
        </authorList>
    </citation>
    <scope>NUCLEOTIDE SEQUENCE [GENOMIC DNA]</scope>
    <source>
        <strain>803</strain>
    </source>
</reference>
<reference key="2">
    <citation type="journal article" date="1991" name="Biochem. J.">
        <title>A standard numbering scheme for the class A beta-lactamases.</title>
        <authorList>
            <person name="Ambler R.P."/>
            <person name="Coulson A.F."/>
            <person name="Frere J.M."/>
            <person name="Ghuysen J.M."/>
            <person name="Joris B."/>
            <person name="Forsman M."/>
            <person name="Levesque R.C."/>
            <person name="Tiraby G."/>
            <person name="Waley S.G."/>
        </authorList>
    </citation>
    <scope>AMINO ACID NUMBERING SCHEME</scope>
</reference>
<sequence length="286" mass="31253">MRYIRLCIISLLATLPLAVHASPQPLEQIKQSESQLSGRVGMIEMDLASGRTLTAWRADERFPMMSTFKVVLCGAVLARVDAGDEQLERKIHYRQQDLVDYSPVSEKHLADGMTVGELCAAAITMSDNSAANLLLATVGGPAGLTAFLRQIGDNVTRLDRWETELNEALPGDARDTTTPASMAATLRKLLTSQRLSARSQRQLLQWMVDDRVAGPLIRSVLPAGWFIADKTGAAERGARGIVALLGPNNKAERIVVIYLRDTPASMAERNQQIAGIGAALIEHWQR</sequence>
<protein>
    <recommendedName>
        <fullName>Beta-lactamase SHV-13</fullName>
        <ecNumber>3.5.2.6</ecNumber>
    </recommendedName>
</protein>
<evidence type="ECO:0000250" key="1"/>
<evidence type="ECO:0000255" key="2"/>
<evidence type="ECO:0000255" key="3">
    <source>
        <dbReference type="PROSITE-ProRule" id="PRU10101"/>
    </source>
</evidence>
<evidence type="ECO:0000305" key="4"/>
<evidence type="ECO:0000305" key="5">
    <source>
    </source>
</evidence>
<gene>
    <name type="primary">bla</name>
    <name type="synonym">shv13</name>
</gene>
<proteinExistence type="inferred from homology"/>
<comment type="function">
    <text>Broad spectrum beta-lactamase which hydrolyzes penicillins, as well as cephalosporins except cephamycins. Also hydrolyzes aztreonam, but not imipenem. Confers highly resistance to ceftazidime, cefotaxime, aztreonam and piperacillin.</text>
</comment>
<comment type="catalytic activity">
    <reaction evidence="3">
        <text>a beta-lactam + H2O = a substituted beta-amino acid</text>
        <dbReference type="Rhea" id="RHEA:20401"/>
        <dbReference type="ChEBI" id="CHEBI:15377"/>
        <dbReference type="ChEBI" id="CHEBI:35627"/>
        <dbReference type="ChEBI" id="CHEBI:140347"/>
        <dbReference type="EC" id="3.5.2.6"/>
    </reaction>
</comment>
<comment type="activity regulation">
    <text>Inhibited 16-fold better by the beta-lactamase inhibitor clavulanic acid than by tazobactam.</text>
</comment>
<comment type="miscellaneous">
    <text evidence="5">The class A beta-lactamase family has a specific amino-acid numbering system, sometimes called Ambler or ABL numbering and often misspelt as Amber. A multiple sequence alignment was used to derive a consensus sequence and then the consensus was numbered taking into account insertions and deletions. This allows use of identical numbers, e.g. for active site residues, despite differences in protein length. UniProt always uses natural numbering of residues, hence there appear to be differences in numbering between this entry and some papers.</text>
</comment>
<comment type="similarity">
    <text evidence="4">Belongs to the class-A beta-lactamase family.</text>
</comment>
<name>BLA13_KLEPN</name>